<protein>
    <recommendedName>
        <fullName evidence="2">Tyrosine--tRNA ligase</fullName>
        <ecNumber evidence="2">6.1.1.1</ecNumber>
    </recommendedName>
    <alternativeName>
        <fullName evidence="2">Tyrosyl-tRNA synthetase</fullName>
        <shortName evidence="2">TyrRS</shortName>
    </alternativeName>
</protein>
<sequence length="424" mass="47860">MASSNLIKQLQERGLVAQVTDEEALAERLAQGPIALYCGFDPTADSLHLGHLVPLLCLKRFQQAGHKPVALVGGATGLIGDPSFKAAERKLNTEETVQEWVDKIRKQVAPFLDFDCGENSAIAANNYDWFGNMNVLTFLRDIGKHFSVNQMINKEAVKQRLNREDEGMSITEFSYNLQQGYDWTCLNTHYYVELQIGGSDQRWNITSEIDLTRRLHQNHVLGLTVPLITKADGTKFGKTEGGAVWLDPKKTSPYKFYQFWINTADADVYRFLKFFTFMSIEEINALEEEDKNSGKAPRAQYVLAEQVTRLVHGEEGLQAAKRITECLFSGSLSALSEADFEQLAQDGVPMVEMEKGADLMQALVDSELQPSRGQARKTIASNAITINGEKQSDPEYFFKEEDRLFGRFTLLRRGKKNYCLICWK</sequence>
<feature type="initiator methionine" description="Removed" evidence="1">
    <location>
        <position position="1"/>
    </location>
</feature>
<feature type="chain" id="PRO_0000234766" description="Tyrosine--tRNA ligase">
    <location>
        <begin position="2"/>
        <end position="424"/>
    </location>
</feature>
<feature type="domain" description="S4 RNA-binding" evidence="2">
    <location>
        <begin position="357"/>
        <end position="414"/>
    </location>
</feature>
<feature type="short sequence motif" description="'HIGH' region">
    <location>
        <begin position="42"/>
        <end position="51"/>
    </location>
</feature>
<feature type="short sequence motif" description="'KMSKS' region">
    <location>
        <begin position="235"/>
        <end position="239"/>
    </location>
</feature>
<feature type="binding site" evidence="2">
    <location>
        <position position="37"/>
    </location>
    <ligand>
        <name>L-tyrosine</name>
        <dbReference type="ChEBI" id="CHEBI:58315"/>
    </ligand>
</feature>
<feature type="binding site" evidence="2">
    <location>
        <position position="175"/>
    </location>
    <ligand>
        <name>L-tyrosine</name>
        <dbReference type="ChEBI" id="CHEBI:58315"/>
    </ligand>
</feature>
<feature type="binding site" evidence="2">
    <location>
        <position position="179"/>
    </location>
    <ligand>
        <name>L-tyrosine</name>
        <dbReference type="ChEBI" id="CHEBI:58315"/>
    </ligand>
</feature>
<feature type="binding site" evidence="2">
    <location>
        <position position="238"/>
    </location>
    <ligand>
        <name>ATP</name>
        <dbReference type="ChEBI" id="CHEBI:30616"/>
    </ligand>
</feature>
<feature type="modified residue" description="N6-acetyllysine" evidence="2">
    <location>
        <position position="144"/>
    </location>
</feature>
<reference key="1">
    <citation type="journal article" date="2005" name="Nucleic Acids Res.">
        <title>Genome dynamics and diversity of Shigella species, the etiologic agents of bacillary dysentery.</title>
        <authorList>
            <person name="Yang F."/>
            <person name="Yang J."/>
            <person name="Zhang X."/>
            <person name="Chen L."/>
            <person name="Jiang Y."/>
            <person name="Yan Y."/>
            <person name="Tang X."/>
            <person name="Wang J."/>
            <person name="Xiong Z."/>
            <person name="Dong J."/>
            <person name="Xue Y."/>
            <person name="Zhu Y."/>
            <person name="Xu X."/>
            <person name="Sun L."/>
            <person name="Chen S."/>
            <person name="Nie H."/>
            <person name="Peng J."/>
            <person name="Xu J."/>
            <person name="Wang Y."/>
            <person name="Yuan Z."/>
            <person name="Wen Y."/>
            <person name="Yao Z."/>
            <person name="Shen Y."/>
            <person name="Qiang B."/>
            <person name="Hou Y."/>
            <person name="Yu J."/>
            <person name="Jin Q."/>
        </authorList>
    </citation>
    <scope>NUCLEOTIDE SEQUENCE [LARGE SCALE GENOMIC DNA]</scope>
    <source>
        <strain>Sb227</strain>
    </source>
</reference>
<organism>
    <name type="scientific">Shigella boydii serotype 4 (strain Sb227)</name>
    <dbReference type="NCBI Taxonomy" id="300268"/>
    <lineage>
        <taxon>Bacteria</taxon>
        <taxon>Pseudomonadati</taxon>
        <taxon>Pseudomonadota</taxon>
        <taxon>Gammaproteobacteria</taxon>
        <taxon>Enterobacterales</taxon>
        <taxon>Enterobacteriaceae</taxon>
        <taxon>Shigella</taxon>
    </lineage>
</organism>
<name>SYY_SHIBS</name>
<proteinExistence type="inferred from homology"/>
<evidence type="ECO:0000250" key="1"/>
<evidence type="ECO:0000255" key="2">
    <source>
        <dbReference type="HAMAP-Rule" id="MF_02006"/>
    </source>
</evidence>
<dbReference type="EC" id="6.1.1.1" evidence="2"/>
<dbReference type="EMBL" id="CP000036">
    <property type="protein sequence ID" value="ABB66114.1"/>
    <property type="molecule type" value="Genomic_DNA"/>
</dbReference>
<dbReference type="RefSeq" id="WP_011379201.1">
    <property type="nucleotide sequence ID" value="NC_007613.1"/>
</dbReference>
<dbReference type="SMR" id="Q320Z4"/>
<dbReference type="KEGG" id="sbo:SBO_1497"/>
<dbReference type="HOGENOM" id="CLU_024003_0_3_6"/>
<dbReference type="Proteomes" id="UP000007067">
    <property type="component" value="Chromosome"/>
</dbReference>
<dbReference type="GO" id="GO:0005829">
    <property type="term" value="C:cytosol"/>
    <property type="evidence" value="ECO:0007669"/>
    <property type="project" value="TreeGrafter"/>
</dbReference>
<dbReference type="GO" id="GO:0005524">
    <property type="term" value="F:ATP binding"/>
    <property type="evidence" value="ECO:0007669"/>
    <property type="project" value="UniProtKB-UniRule"/>
</dbReference>
<dbReference type="GO" id="GO:0003723">
    <property type="term" value="F:RNA binding"/>
    <property type="evidence" value="ECO:0007669"/>
    <property type="project" value="UniProtKB-KW"/>
</dbReference>
<dbReference type="GO" id="GO:0004831">
    <property type="term" value="F:tyrosine-tRNA ligase activity"/>
    <property type="evidence" value="ECO:0007669"/>
    <property type="project" value="UniProtKB-UniRule"/>
</dbReference>
<dbReference type="GO" id="GO:0006437">
    <property type="term" value="P:tyrosyl-tRNA aminoacylation"/>
    <property type="evidence" value="ECO:0007669"/>
    <property type="project" value="UniProtKB-UniRule"/>
</dbReference>
<dbReference type="CDD" id="cd00165">
    <property type="entry name" value="S4"/>
    <property type="match status" value="1"/>
</dbReference>
<dbReference type="CDD" id="cd00805">
    <property type="entry name" value="TyrRS_core"/>
    <property type="match status" value="1"/>
</dbReference>
<dbReference type="FunFam" id="1.10.240.10:FF:000001">
    <property type="entry name" value="Tyrosine--tRNA ligase"/>
    <property type="match status" value="1"/>
</dbReference>
<dbReference type="FunFam" id="3.10.290.10:FF:000007">
    <property type="entry name" value="Tyrosine--tRNA ligase"/>
    <property type="match status" value="1"/>
</dbReference>
<dbReference type="FunFam" id="3.40.50.620:FF:000008">
    <property type="entry name" value="Tyrosine--tRNA ligase"/>
    <property type="match status" value="1"/>
</dbReference>
<dbReference type="Gene3D" id="3.40.50.620">
    <property type="entry name" value="HUPs"/>
    <property type="match status" value="1"/>
</dbReference>
<dbReference type="Gene3D" id="3.10.290.10">
    <property type="entry name" value="RNA-binding S4 domain"/>
    <property type="match status" value="1"/>
</dbReference>
<dbReference type="Gene3D" id="1.10.240.10">
    <property type="entry name" value="Tyrosyl-Transfer RNA Synthetase"/>
    <property type="match status" value="1"/>
</dbReference>
<dbReference type="HAMAP" id="MF_02006">
    <property type="entry name" value="Tyr_tRNA_synth_type1"/>
    <property type="match status" value="1"/>
</dbReference>
<dbReference type="InterPro" id="IPR001412">
    <property type="entry name" value="aa-tRNA-synth_I_CS"/>
</dbReference>
<dbReference type="InterPro" id="IPR002305">
    <property type="entry name" value="aa-tRNA-synth_Ic"/>
</dbReference>
<dbReference type="InterPro" id="IPR014729">
    <property type="entry name" value="Rossmann-like_a/b/a_fold"/>
</dbReference>
<dbReference type="InterPro" id="IPR002942">
    <property type="entry name" value="S4_RNA-bd"/>
</dbReference>
<dbReference type="InterPro" id="IPR036986">
    <property type="entry name" value="S4_RNA-bd_sf"/>
</dbReference>
<dbReference type="InterPro" id="IPR054608">
    <property type="entry name" value="SYY-like_C"/>
</dbReference>
<dbReference type="InterPro" id="IPR002307">
    <property type="entry name" value="Tyr-tRNA-ligase"/>
</dbReference>
<dbReference type="InterPro" id="IPR024088">
    <property type="entry name" value="Tyr-tRNA-ligase_bac-type"/>
</dbReference>
<dbReference type="InterPro" id="IPR024107">
    <property type="entry name" value="Tyr-tRNA-ligase_bac_1"/>
</dbReference>
<dbReference type="NCBIfam" id="TIGR00234">
    <property type="entry name" value="tyrS"/>
    <property type="match status" value="1"/>
</dbReference>
<dbReference type="PANTHER" id="PTHR11766:SF0">
    <property type="entry name" value="TYROSINE--TRNA LIGASE, MITOCHONDRIAL"/>
    <property type="match status" value="1"/>
</dbReference>
<dbReference type="PANTHER" id="PTHR11766">
    <property type="entry name" value="TYROSYL-TRNA SYNTHETASE"/>
    <property type="match status" value="1"/>
</dbReference>
<dbReference type="Pfam" id="PF22421">
    <property type="entry name" value="SYY_C-terminal"/>
    <property type="match status" value="1"/>
</dbReference>
<dbReference type="Pfam" id="PF00579">
    <property type="entry name" value="tRNA-synt_1b"/>
    <property type="match status" value="1"/>
</dbReference>
<dbReference type="PRINTS" id="PR01040">
    <property type="entry name" value="TRNASYNTHTYR"/>
</dbReference>
<dbReference type="SMART" id="SM00363">
    <property type="entry name" value="S4"/>
    <property type="match status" value="1"/>
</dbReference>
<dbReference type="SUPFAM" id="SSF55174">
    <property type="entry name" value="Alpha-L RNA-binding motif"/>
    <property type="match status" value="1"/>
</dbReference>
<dbReference type="SUPFAM" id="SSF52374">
    <property type="entry name" value="Nucleotidylyl transferase"/>
    <property type="match status" value="1"/>
</dbReference>
<dbReference type="PROSITE" id="PS00178">
    <property type="entry name" value="AA_TRNA_LIGASE_I"/>
    <property type="match status" value="1"/>
</dbReference>
<dbReference type="PROSITE" id="PS50889">
    <property type="entry name" value="S4"/>
    <property type="match status" value="1"/>
</dbReference>
<gene>
    <name evidence="2" type="primary">tyrS</name>
    <name type="ordered locus">SBO_1497</name>
</gene>
<keyword id="KW-0007">Acetylation</keyword>
<keyword id="KW-0030">Aminoacyl-tRNA synthetase</keyword>
<keyword id="KW-0067">ATP-binding</keyword>
<keyword id="KW-0963">Cytoplasm</keyword>
<keyword id="KW-0436">Ligase</keyword>
<keyword id="KW-0547">Nucleotide-binding</keyword>
<keyword id="KW-0648">Protein biosynthesis</keyword>
<keyword id="KW-0694">RNA-binding</keyword>
<comment type="function">
    <text evidence="2">Catalyzes the attachment of tyrosine to tRNA(Tyr) in a two-step reaction: tyrosine is first activated by ATP to form Tyr-AMP and then transferred to the acceptor end of tRNA(Tyr).</text>
</comment>
<comment type="catalytic activity">
    <reaction evidence="2">
        <text>tRNA(Tyr) + L-tyrosine + ATP = L-tyrosyl-tRNA(Tyr) + AMP + diphosphate + H(+)</text>
        <dbReference type="Rhea" id="RHEA:10220"/>
        <dbReference type="Rhea" id="RHEA-COMP:9706"/>
        <dbReference type="Rhea" id="RHEA-COMP:9707"/>
        <dbReference type="ChEBI" id="CHEBI:15378"/>
        <dbReference type="ChEBI" id="CHEBI:30616"/>
        <dbReference type="ChEBI" id="CHEBI:33019"/>
        <dbReference type="ChEBI" id="CHEBI:58315"/>
        <dbReference type="ChEBI" id="CHEBI:78442"/>
        <dbReference type="ChEBI" id="CHEBI:78536"/>
        <dbReference type="ChEBI" id="CHEBI:456215"/>
        <dbReference type="EC" id="6.1.1.1"/>
    </reaction>
</comment>
<comment type="subunit">
    <text evidence="2">Homodimer.</text>
</comment>
<comment type="subcellular location">
    <subcellularLocation>
        <location evidence="2">Cytoplasm</location>
    </subcellularLocation>
</comment>
<comment type="similarity">
    <text evidence="2">Belongs to the class-I aminoacyl-tRNA synthetase family. TyrS type 1 subfamily.</text>
</comment>
<accession>Q320Z4</accession>